<evidence type="ECO:0000255" key="1">
    <source>
        <dbReference type="HAMAP-Rule" id="MF_00181"/>
    </source>
</evidence>
<gene>
    <name evidence="1" type="primary">pepA</name>
    <name type="ordered locus">PputW619_4237</name>
</gene>
<protein>
    <recommendedName>
        <fullName evidence="1">Probable cytosol aminopeptidase</fullName>
        <ecNumber evidence="1">3.4.11.1</ecNumber>
    </recommendedName>
    <alternativeName>
        <fullName evidence="1">Leucine aminopeptidase</fullName>
        <shortName evidence="1">LAP</shortName>
        <ecNumber evidence="1">3.4.11.10</ecNumber>
    </alternativeName>
    <alternativeName>
        <fullName evidence="1">Leucyl aminopeptidase</fullName>
    </alternativeName>
</protein>
<name>AMPA_PSEPW</name>
<accession>B1JBA9</accession>
<organism>
    <name type="scientific">Pseudomonas putida (strain W619)</name>
    <dbReference type="NCBI Taxonomy" id="390235"/>
    <lineage>
        <taxon>Bacteria</taxon>
        <taxon>Pseudomonadati</taxon>
        <taxon>Pseudomonadota</taxon>
        <taxon>Gammaproteobacteria</taxon>
        <taxon>Pseudomonadales</taxon>
        <taxon>Pseudomonadaceae</taxon>
        <taxon>Pseudomonas</taxon>
    </lineage>
</organism>
<sequence length="497" mass="52478">MELVVKSVAAASVKTATLVVPVGEGRKLGAVAKAVDLATDGAISAVLKRGDLAGKPGQTLLLQNLPGLKAERVLLVGSGKDEALGDRAWRKLVASVAGVLKGLNGSDAVLALDDIAVSNRDAHYGKYRLLAETLLDGEYVFDRFKSQKAEPRALKKITLLADKAGLTEVERAARHATAIATGMAFTRDLGNLPPNLCHPSYLAEQAKELGKAHKGLKVEVFDEKKIKDLGMGAFYAVGQGSEQPPRLIVLQYQGAKKSDKPFVLVGKGITFDTGGISLKPGAGMDEMKYDMCGAASVFGTLRAVLELKLPINLVCILACAENMPSGNATRPGDIVTTMSGQTVEILNTDAEGRLVLCDALTYAERFKPQAVIDIATLTGACIVALGSHTAGLLGNNDELIGQLLDAGKRADDRAWQLPLFDEYQEQLDSPFADIANIGGPKAGTITAACFLSRFAKAYNWAHLDIAGTAWVSGGKDKGATGRPVPLLTQYLLDRASA</sequence>
<feature type="chain" id="PRO_1000098337" description="Probable cytosol aminopeptidase">
    <location>
        <begin position="1"/>
        <end position="497"/>
    </location>
</feature>
<feature type="active site" evidence="1">
    <location>
        <position position="279"/>
    </location>
</feature>
<feature type="active site" evidence="1">
    <location>
        <position position="353"/>
    </location>
</feature>
<feature type="binding site" evidence="1">
    <location>
        <position position="267"/>
    </location>
    <ligand>
        <name>Mn(2+)</name>
        <dbReference type="ChEBI" id="CHEBI:29035"/>
        <label>2</label>
    </ligand>
</feature>
<feature type="binding site" evidence="1">
    <location>
        <position position="272"/>
    </location>
    <ligand>
        <name>Mn(2+)</name>
        <dbReference type="ChEBI" id="CHEBI:29035"/>
        <label>1</label>
    </ligand>
</feature>
<feature type="binding site" evidence="1">
    <location>
        <position position="272"/>
    </location>
    <ligand>
        <name>Mn(2+)</name>
        <dbReference type="ChEBI" id="CHEBI:29035"/>
        <label>2</label>
    </ligand>
</feature>
<feature type="binding site" evidence="1">
    <location>
        <position position="290"/>
    </location>
    <ligand>
        <name>Mn(2+)</name>
        <dbReference type="ChEBI" id="CHEBI:29035"/>
        <label>2</label>
    </ligand>
</feature>
<feature type="binding site" evidence="1">
    <location>
        <position position="349"/>
    </location>
    <ligand>
        <name>Mn(2+)</name>
        <dbReference type="ChEBI" id="CHEBI:29035"/>
        <label>1</label>
    </ligand>
</feature>
<feature type="binding site" evidence="1">
    <location>
        <position position="351"/>
    </location>
    <ligand>
        <name>Mn(2+)</name>
        <dbReference type="ChEBI" id="CHEBI:29035"/>
        <label>1</label>
    </ligand>
</feature>
<feature type="binding site" evidence="1">
    <location>
        <position position="351"/>
    </location>
    <ligand>
        <name>Mn(2+)</name>
        <dbReference type="ChEBI" id="CHEBI:29035"/>
        <label>2</label>
    </ligand>
</feature>
<comment type="function">
    <text evidence="1">Presumably involved in the processing and regular turnover of intracellular proteins. Catalyzes the removal of unsubstituted N-terminal amino acids from various peptides.</text>
</comment>
<comment type="catalytic activity">
    <reaction evidence="1">
        <text>Release of an N-terminal amino acid, Xaa-|-Yaa-, in which Xaa is preferably Leu, but may be other amino acids including Pro although not Arg or Lys, and Yaa may be Pro. Amino acid amides and methyl esters are also readily hydrolyzed, but rates on arylamides are exceedingly low.</text>
        <dbReference type="EC" id="3.4.11.1"/>
    </reaction>
</comment>
<comment type="catalytic activity">
    <reaction evidence="1">
        <text>Release of an N-terminal amino acid, preferentially leucine, but not glutamic or aspartic acids.</text>
        <dbReference type="EC" id="3.4.11.10"/>
    </reaction>
</comment>
<comment type="cofactor">
    <cofactor evidence="1">
        <name>Mn(2+)</name>
        <dbReference type="ChEBI" id="CHEBI:29035"/>
    </cofactor>
    <text evidence="1">Binds 2 manganese ions per subunit.</text>
</comment>
<comment type="subcellular location">
    <subcellularLocation>
        <location evidence="1">Cytoplasm</location>
    </subcellularLocation>
</comment>
<comment type="similarity">
    <text evidence="1">Belongs to the peptidase M17 family.</text>
</comment>
<proteinExistence type="inferred from homology"/>
<dbReference type="EC" id="3.4.11.1" evidence="1"/>
<dbReference type="EC" id="3.4.11.10" evidence="1"/>
<dbReference type="EMBL" id="CP000949">
    <property type="protein sequence ID" value="ACA74717.1"/>
    <property type="molecule type" value="Genomic_DNA"/>
</dbReference>
<dbReference type="SMR" id="B1JBA9"/>
<dbReference type="STRING" id="390235.PputW619_4237"/>
<dbReference type="MEROPS" id="M17.003"/>
<dbReference type="KEGG" id="ppw:PputW619_4237"/>
<dbReference type="eggNOG" id="COG0260">
    <property type="taxonomic scope" value="Bacteria"/>
</dbReference>
<dbReference type="HOGENOM" id="CLU_013734_0_1_6"/>
<dbReference type="OrthoDB" id="9809354at2"/>
<dbReference type="GO" id="GO:0005737">
    <property type="term" value="C:cytoplasm"/>
    <property type="evidence" value="ECO:0007669"/>
    <property type="project" value="UniProtKB-SubCell"/>
</dbReference>
<dbReference type="GO" id="GO:0030145">
    <property type="term" value="F:manganese ion binding"/>
    <property type="evidence" value="ECO:0007669"/>
    <property type="project" value="UniProtKB-UniRule"/>
</dbReference>
<dbReference type="GO" id="GO:0070006">
    <property type="term" value="F:metalloaminopeptidase activity"/>
    <property type="evidence" value="ECO:0007669"/>
    <property type="project" value="InterPro"/>
</dbReference>
<dbReference type="GO" id="GO:0006508">
    <property type="term" value="P:proteolysis"/>
    <property type="evidence" value="ECO:0007669"/>
    <property type="project" value="UniProtKB-KW"/>
</dbReference>
<dbReference type="CDD" id="cd00433">
    <property type="entry name" value="Peptidase_M17"/>
    <property type="match status" value="1"/>
</dbReference>
<dbReference type="FunFam" id="3.40.630.10:FF:000004">
    <property type="entry name" value="Probable cytosol aminopeptidase"/>
    <property type="match status" value="1"/>
</dbReference>
<dbReference type="Gene3D" id="3.40.220.10">
    <property type="entry name" value="Leucine Aminopeptidase, subunit E, domain 1"/>
    <property type="match status" value="1"/>
</dbReference>
<dbReference type="Gene3D" id="3.40.630.10">
    <property type="entry name" value="Zn peptidases"/>
    <property type="match status" value="1"/>
</dbReference>
<dbReference type="HAMAP" id="MF_00181">
    <property type="entry name" value="Cytosol_peptidase_M17"/>
    <property type="match status" value="1"/>
</dbReference>
<dbReference type="InterPro" id="IPR011356">
    <property type="entry name" value="Leucine_aapep/pepB"/>
</dbReference>
<dbReference type="InterPro" id="IPR043472">
    <property type="entry name" value="Macro_dom-like"/>
</dbReference>
<dbReference type="InterPro" id="IPR000819">
    <property type="entry name" value="Peptidase_M17_C"/>
</dbReference>
<dbReference type="InterPro" id="IPR023042">
    <property type="entry name" value="Peptidase_M17_leu_NH2_pept"/>
</dbReference>
<dbReference type="InterPro" id="IPR008283">
    <property type="entry name" value="Peptidase_M17_N"/>
</dbReference>
<dbReference type="NCBIfam" id="NF002073">
    <property type="entry name" value="PRK00913.1-2"/>
    <property type="match status" value="1"/>
</dbReference>
<dbReference type="NCBIfam" id="NF002074">
    <property type="entry name" value="PRK00913.1-4"/>
    <property type="match status" value="1"/>
</dbReference>
<dbReference type="NCBIfam" id="NF002077">
    <property type="entry name" value="PRK00913.2-4"/>
    <property type="match status" value="1"/>
</dbReference>
<dbReference type="PANTHER" id="PTHR11963:SF23">
    <property type="entry name" value="CYTOSOL AMINOPEPTIDASE"/>
    <property type="match status" value="1"/>
</dbReference>
<dbReference type="PANTHER" id="PTHR11963">
    <property type="entry name" value="LEUCINE AMINOPEPTIDASE-RELATED"/>
    <property type="match status" value="1"/>
</dbReference>
<dbReference type="Pfam" id="PF00883">
    <property type="entry name" value="Peptidase_M17"/>
    <property type="match status" value="1"/>
</dbReference>
<dbReference type="Pfam" id="PF02789">
    <property type="entry name" value="Peptidase_M17_N"/>
    <property type="match status" value="1"/>
</dbReference>
<dbReference type="PRINTS" id="PR00481">
    <property type="entry name" value="LAMNOPPTDASE"/>
</dbReference>
<dbReference type="SUPFAM" id="SSF52949">
    <property type="entry name" value="Macro domain-like"/>
    <property type="match status" value="1"/>
</dbReference>
<dbReference type="SUPFAM" id="SSF53187">
    <property type="entry name" value="Zn-dependent exopeptidases"/>
    <property type="match status" value="1"/>
</dbReference>
<dbReference type="PROSITE" id="PS00631">
    <property type="entry name" value="CYTOSOL_AP"/>
    <property type="match status" value="1"/>
</dbReference>
<reference key="1">
    <citation type="submission" date="2008-02" db="EMBL/GenBank/DDBJ databases">
        <title>Complete sequence of Pseudomonas putida W619.</title>
        <authorList>
            <person name="Copeland A."/>
            <person name="Lucas S."/>
            <person name="Lapidus A."/>
            <person name="Barry K."/>
            <person name="Detter J.C."/>
            <person name="Glavina del Rio T."/>
            <person name="Dalin E."/>
            <person name="Tice H."/>
            <person name="Pitluck S."/>
            <person name="Chain P."/>
            <person name="Malfatti S."/>
            <person name="Shin M."/>
            <person name="Vergez L."/>
            <person name="Schmutz J."/>
            <person name="Larimer F."/>
            <person name="Land M."/>
            <person name="Hauser L."/>
            <person name="Kyrpides N."/>
            <person name="Kim E."/>
            <person name="Taghavi S."/>
            <person name="Vangronsveld D."/>
            <person name="van der Lelie D."/>
            <person name="Richardson P."/>
        </authorList>
    </citation>
    <scope>NUCLEOTIDE SEQUENCE [LARGE SCALE GENOMIC DNA]</scope>
    <source>
        <strain>W619</strain>
    </source>
</reference>
<keyword id="KW-0031">Aminopeptidase</keyword>
<keyword id="KW-0963">Cytoplasm</keyword>
<keyword id="KW-0378">Hydrolase</keyword>
<keyword id="KW-0464">Manganese</keyword>
<keyword id="KW-0479">Metal-binding</keyword>
<keyword id="KW-0645">Protease</keyword>